<gene>
    <name evidence="1" type="primary">rpsH</name>
    <name type="ordered locus">mlr0310</name>
</gene>
<organism>
    <name type="scientific">Mesorhizobium japonicum (strain LMG 29417 / CECT 9101 / MAFF 303099)</name>
    <name type="common">Mesorhizobium loti (strain MAFF 303099)</name>
    <dbReference type="NCBI Taxonomy" id="266835"/>
    <lineage>
        <taxon>Bacteria</taxon>
        <taxon>Pseudomonadati</taxon>
        <taxon>Pseudomonadota</taxon>
        <taxon>Alphaproteobacteria</taxon>
        <taxon>Hyphomicrobiales</taxon>
        <taxon>Phyllobacteriaceae</taxon>
        <taxon>Mesorhizobium</taxon>
    </lineage>
</organism>
<dbReference type="EMBL" id="BA000012">
    <property type="protein sequence ID" value="BAB47920.1"/>
    <property type="molecule type" value="Genomic_DNA"/>
</dbReference>
<dbReference type="RefSeq" id="WP_006205453.1">
    <property type="nucleotide sequence ID" value="NC_002678.2"/>
</dbReference>
<dbReference type="SMR" id="Q98N43"/>
<dbReference type="GeneID" id="90991568"/>
<dbReference type="KEGG" id="mlo:mlr0310"/>
<dbReference type="eggNOG" id="COG0096">
    <property type="taxonomic scope" value="Bacteria"/>
</dbReference>
<dbReference type="HOGENOM" id="CLU_098428_0_0_5"/>
<dbReference type="Proteomes" id="UP000000552">
    <property type="component" value="Chromosome"/>
</dbReference>
<dbReference type="GO" id="GO:1990904">
    <property type="term" value="C:ribonucleoprotein complex"/>
    <property type="evidence" value="ECO:0007669"/>
    <property type="project" value="UniProtKB-KW"/>
</dbReference>
<dbReference type="GO" id="GO:0005840">
    <property type="term" value="C:ribosome"/>
    <property type="evidence" value="ECO:0007669"/>
    <property type="project" value="UniProtKB-KW"/>
</dbReference>
<dbReference type="GO" id="GO:0019843">
    <property type="term" value="F:rRNA binding"/>
    <property type="evidence" value="ECO:0007669"/>
    <property type="project" value="UniProtKB-UniRule"/>
</dbReference>
<dbReference type="GO" id="GO:0003735">
    <property type="term" value="F:structural constituent of ribosome"/>
    <property type="evidence" value="ECO:0007669"/>
    <property type="project" value="InterPro"/>
</dbReference>
<dbReference type="GO" id="GO:0006412">
    <property type="term" value="P:translation"/>
    <property type="evidence" value="ECO:0007669"/>
    <property type="project" value="UniProtKB-UniRule"/>
</dbReference>
<dbReference type="FunFam" id="3.30.1370.30:FF:000002">
    <property type="entry name" value="30S ribosomal protein S8"/>
    <property type="match status" value="1"/>
</dbReference>
<dbReference type="FunFam" id="3.30.1490.10:FF:000001">
    <property type="entry name" value="30S ribosomal protein S8"/>
    <property type="match status" value="1"/>
</dbReference>
<dbReference type="Gene3D" id="3.30.1370.30">
    <property type="match status" value="1"/>
</dbReference>
<dbReference type="Gene3D" id="3.30.1490.10">
    <property type="match status" value="1"/>
</dbReference>
<dbReference type="HAMAP" id="MF_01302_B">
    <property type="entry name" value="Ribosomal_uS8_B"/>
    <property type="match status" value="1"/>
</dbReference>
<dbReference type="InterPro" id="IPR000630">
    <property type="entry name" value="Ribosomal_uS8"/>
</dbReference>
<dbReference type="InterPro" id="IPR047863">
    <property type="entry name" value="Ribosomal_uS8_CS"/>
</dbReference>
<dbReference type="InterPro" id="IPR035987">
    <property type="entry name" value="Ribosomal_uS8_sf"/>
</dbReference>
<dbReference type="NCBIfam" id="NF001109">
    <property type="entry name" value="PRK00136.1"/>
    <property type="match status" value="1"/>
</dbReference>
<dbReference type="PANTHER" id="PTHR11758">
    <property type="entry name" value="40S RIBOSOMAL PROTEIN S15A"/>
    <property type="match status" value="1"/>
</dbReference>
<dbReference type="Pfam" id="PF00410">
    <property type="entry name" value="Ribosomal_S8"/>
    <property type="match status" value="1"/>
</dbReference>
<dbReference type="SUPFAM" id="SSF56047">
    <property type="entry name" value="Ribosomal protein S8"/>
    <property type="match status" value="1"/>
</dbReference>
<dbReference type="PROSITE" id="PS00053">
    <property type="entry name" value="RIBOSOMAL_S8"/>
    <property type="match status" value="1"/>
</dbReference>
<feature type="chain" id="PRO_0000126470" description="Small ribosomal subunit protein uS8">
    <location>
        <begin position="1"/>
        <end position="132"/>
    </location>
</feature>
<reference key="1">
    <citation type="journal article" date="2000" name="DNA Res.">
        <title>Complete genome structure of the nitrogen-fixing symbiotic bacterium Mesorhizobium loti.</title>
        <authorList>
            <person name="Kaneko T."/>
            <person name="Nakamura Y."/>
            <person name="Sato S."/>
            <person name="Asamizu E."/>
            <person name="Kato T."/>
            <person name="Sasamoto S."/>
            <person name="Watanabe A."/>
            <person name="Idesawa K."/>
            <person name="Ishikawa A."/>
            <person name="Kawashima K."/>
            <person name="Kimura T."/>
            <person name="Kishida Y."/>
            <person name="Kiyokawa C."/>
            <person name="Kohara M."/>
            <person name="Matsumoto M."/>
            <person name="Matsuno A."/>
            <person name="Mochizuki Y."/>
            <person name="Nakayama S."/>
            <person name="Nakazaki N."/>
            <person name="Shimpo S."/>
            <person name="Sugimoto M."/>
            <person name="Takeuchi C."/>
            <person name="Yamada M."/>
            <person name="Tabata S."/>
        </authorList>
    </citation>
    <scope>NUCLEOTIDE SEQUENCE [LARGE SCALE GENOMIC DNA]</scope>
    <source>
        <strain>LMG 29417 / CECT 9101 / MAFF 303099</strain>
    </source>
</reference>
<proteinExistence type="inferred from homology"/>
<name>RS8_RHILO</name>
<evidence type="ECO:0000255" key="1">
    <source>
        <dbReference type="HAMAP-Rule" id="MF_01302"/>
    </source>
</evidence>
<evidence type="ECO:0000305" key="2"/>
<comment type="function">
    <text evidence="1">One of the primary rRNA binding proteins, it binds directly to 16S rRNA central domain where it helps coordinate assembly of the platform of the 30S subunit.</text>
</comment>
<comment type="subunit">
    <text evidence="1">Part of the 30S ribosomal subunit. Contacts proteins S5 and S12.</text>
</comment>
<comment type="similarity">
    <text evidence="1">Belongs to the universal ribosomal protein uS8 family.</text>
</comment>
<sequence length="132" mass="14566">MSLSDPLGDMLTRIRNAYGRKKSSVSTPASRLRTRVLDVLKAEGYIRDYSQTDFDNGKSEIEIELKYFDGAPVVREIARVSKPGRRVYVSAKSIPHVANGLGIAILSTPKGVMADHEAREQNVGGEILCQIF</sequence>
<keyword id="KW-0687">Ribonucleoprotein</keyword>
<keyword id="KW-0689">Ribosomal protein</keyword>
<keyword id="KW-0694">RNA-binding</keyword>
<keyword id="KW-0699">rRNA-binding</keyword>
<accession>Q98N43</accession>
<protein>
    <recommendedName>
        <fullName evidence="1">Small ribosomal subunit protein uS8</fullName>
    </recommendedName>
    <alternativeName>
        <fullName evidence="2">30S ribosomal protein S8</fullName>
    </alternativeName>
</protein>